<name>SYL_PYRAR</name>
<organism>
    <name type="scientific">Pyrobaculum arsenaticum (strain DSM 13514 / JCM 11321 / PZ6)</name>
    <dbReference type="NCBI Taxonomy" id="340102"/>
    <lineage>
        <taxon>Archaea</taxon>
        <taxon>Thermoproteota</taxon>
        <taxon>Thermoprotei</taxon>
        <taxon>Thermoproteales</taxon>
        <taxon>Thermoproteaceae</taxon>
        <taxon>Pyrobaculum</taxon>
    </lineage>
</organism>
<keyword id="KW-0030">Aminoacyl-tRNA synthetase</keyword>
<keyword id="KW-0067">ATP-binding</keyword>
<keyword id="KW-0963">Cytoplasm</keyword>
<keyword id="KW-0436">Ligase</keyword>
<keyword id="KW-0547">Nucleotide-binding</keyword>
<keyword id="KW-0648">Protein biosynthesis</keyword>
<sequence length="945" mass="107394">MSELARFFIELGEKWQKRWAEARVYEPAPTLGVPKFFITAAYPYPNGAIHIGHGRTYLIADVLARFHRHLGRAVLFPMAFHYTGTPILTIAEAIAAGDETVVEEYMAIYGVPEEEMRKMGDPLYLARYFHEQSKRAMQKFGLSIDWTREFTTIDPEYQRFIQWQFEKLRKKGLIVRGRHPVGWCPRHSMPVGAHDTKDDKEPDIGEWTLIYFADRDGLIFPAATLRPETVLGVTNMWINPEGEYVVAEYDGRKMVLSRDAAYRLSFQGSVKVLREAKGREFVGREVQNPVTGEWVPIYGAKFVDPKVGTGVVMSVPAHAPYDYAALRDIGAIRLIPLIKVEGYGEYPAKDVVERMEIKSQTDPALEEATKEVYSAEYARGVMREDVVELVGRHLPEPARSMVMAVFKMYFAGRPVREAREFISKWLAEAGLGGVMYDIMNKPVYCRCGTEIVVKVLEDQWFINYGEPRWKELAKKLVEEMTIVPPEAKAQFFATIDWLDKRACARTRGLGTPLPWSHGWVIESLSDSTIYMAYYAVIKGIRRHNLRPEQLTEEFWDYVFLGVGTPEEVSAKTGIPAEALRAIREEFEFWYPLDSRNSGKDLIPNHLTFFIFNHVAIFPREKWPRQIVANGWVLREGEKMSKSKRNVLPLDKAVEMYGPDPLRATLAISAEVEQDLDFRHAEAVRNAQQLMSIYTLAQRLAQSAEDREPTWLDRWLLSEVALALERVRDAYEKVRVRQAAVELLYNIKNIFDSYMTAVERPSRLAVEVAKAWAVALEPIAPHLAEEVWSLLGGEGFVTSAKWPQLKPDPAALLARRYVDMVVEDVKKIPAYGEGVRRVVLYINPNFTWVKAALNNDVKSAIAAGTPPQLAKRLVELVRTLGDEVRSLIAAVENFDEREALLSYKNYVEKALGAPVEVYTAEDPAAPDLGGKKKAALPLKPGIFIER</sequence>
<accession>A4WHK6</accession>
<dbReference type="EC" id="6.1.1.4" evidence="1"/>
<dbReference type="EMBL" id="CP000660">
    <property type="protein sequence ID" value="ABP49873.1"/>
    <property type="molecule type" value="Genomic_DNA"/>
</dbReference>
<dbReference type="SMR" id="A4WHK6"/>
<dbReference type="STRING" id="340102.Pars_0260"/>
<dbReference type="KEGG" id="pas:Pars_0260"/>
<dbReference type="HOGENOM" id="CLU_004174_0_0_2"/>
<dbReference type="OrthoDB" id="23906at2157"/>
<dbReference type="PhylomeDB" id="A4WHK6"/>
<dbReference type="Proteomes" id="UP000001567">
    <property type="component" value="Chromosome"/>
</dbReference>
<dbReference type="GO" id="GO:0005737">
    <property type="term" value="C:cytoplasm"/>
    <property type="evidence" value="ECO:0007669"/>
    <property type="project" value="UniProtKB-SubCell"/>
</dbReference>
<dbReference type="GO" id="GO:0002161">
    <property type="term" value="F:aminoacyl-tRNA deacylase activity"/>
    <property type="evidence" value="ECO:0007669"/>
    <property type="project" value="InterPro"/>
</dbReference>
<dbReference type="GO" id="GO:0005524">
    <property type="term" value="F:ATP binding"/>
    <property type="evidence" value="ECO:0007669"/>
    <property type="project" value="UniProtKB-UniRule"/>
</dbReference>
<dbReference type="GO" id="GO:0004823">
    <property type="term" value="F:leucine-tRNA ligase activity"/>
    <property type="evidence" value="ECO:0007669"/>
    <property type="project" value="UniProtKB-UniRule"/>
</dbReference>
<dbReference type="GO" id="GO:0006429">
    <property type="term" value="P:leucyl-tRNA aminoacylation"/>
    <property type="evidence" value="ECO:0007669"/>
    <property type="project" value="UniProtKB-UniRule"/>
</dbReference>
<dbReference type="Gene3D" id="3.30.2320.20">
    <property type="entry name" value="Class I aminoacyl-tRNA synthetases (RS)"/>
    <property type="match status" value="1"/>
</dbReference>
<dbReference type="Gene3D" id="3.40.50.620">
    <property type="entry name" value="HUPs"/>
    <property type="match status" value="1"/>
</dbReference>
<dbReference type="Gene3D" id="1.10.730.10">
    <property type="entry name" value="Isoleucyl-tRNA Synthetase, Domain 1"/>
    <property type="match status" value="1"/>
</dbReference>
<dbReference type="Gene3D" id="1.10.10.720">
    <property type="entry name" value="leucyl-tRNA synthetase"/>
    <property type="match status" value="1"/>
</dbReference>
<dbReference type="Gene3D" id="3.90.740.10">
    <property type="entry name" value="Valyl/Leucyl/Isoleucyl-tRNA synthetase, editing domain"/>
    <property type="match status" value="1"/>
</dbReference>
<dbReference type="HAMAP" id="MF_00049_A">
    <property type="entry name" value="Leu_tRNA_synth_A"/>
    <property type="match status" value="1"/>
</dbReference>
<dbReference type="InterPro" id="IPR001412">
    <property type="entry name" value="aa-tRNA-synth_I_CS"/>
</dbReference>
<dbReference type="InterPro" id="IPR002300">
    <property type="entry name" value="aa-tRNA-synth_Ia"/>
</dbReference>
<dbReference type="InterPro" id="IPR020791">
    <property type="entry name" value="Leu-tRNA-lgase_arc"/>
</dbReference>
<dbReference type="InterPro" id="IPR004493">
    <property type="entry name" value="Leu-tRNA-synth_Ia_arc/euk"/>
</dbReference>
<dbReference type="InterPro" id="IPR013155">
    <property type="entry name" value="M/V/L/I-tRNA-synth_anticd-bd"/>
</dbReference>
<dbReference type="InterPro" id="IPR014729">
    <property type="entry name" value="Rossmann-like_a/b/a_fold"/>
</dbReference>
<dbReference type="InterPro" id="IPR009080">
    <property type="entry name" value="tRNAsynth_Ia_anticodon-bd"/>
</dbReference>
<dbReference type="InterPro" id="IPR009008">
    <property type="entry name" value="Val/Leu/Ile-tRNA-synth_edit"/>
</dbReference>
<dbReference type="NCBIfam" id="TIGR00395">
    <property type="entry name" value="leuS_arch"/>
    <property type="match status" value="1"/>
</dbReference>
<dbReference type="NCBIfam" id="NF008957">
    <property type="entry name" value="PRK12300.1"/>
    <property type="match status" value="1"/>
</dbReference>
<dbReference type="PANTHER" id="PTHR45794:SF1">
    <property type="entry name" value="LEUCINE--TRNA LIGASE, CYTOPLASMIC"/>
    <property type="match status" value="1"/>
</dbReference>
<dbReference type="PANTHER" id="PTHR45794">
    <property type="entry name" value="LEUCYL-TRNA SYNTHETASE"/>
    <property type="match status" value="1"/>
</dbReference>
<dbReference type="Pfam" id="PF08264">
    <property type="entry name" value="Anticodon_1"/>
    <property type="match status" value="1"/>
</dbReference>
<dbReference type="Pfam" id="PF00133">
    <property type="entry name" value="tRNA-synt_1"/>
    <property type="match status" value="1"/>
</dbReference>
<dbReference type="SUPFAM" id="SSF47323">
    <property type="entry name" value="Anticodon-binding domain of a subclass of class I aminoacyl-tRNA synthetases"/>
    <property type="match status" value="1"/>
</dbReference>
<dbReference type="SUPFAM" id="SSF52374">
    <property type="entry name" value="Nucleotidylyl transferase"/>
    <property type="match status" value="1"/>
</dbReference>
<dbReference type="SUPFAM" id="SSF50677">
    <property type="entry name" value="ValRS/IleRS/LeuRS editing domain"/>
    <property type="match status" value="1"/>
</dbReference>
<dbReference type="PROSITE" id="PS00178">
    <property type="entry name" value="AA_TRNA_LIGASE_I"/>
    <property type="match status" value="1"/>
</dbReference>
<comment type="catalytic activity">
    <reaction evidence="1">
        <text>tRNA(Leu) + L-leucine + ATP = L-leucyl-tRNA(Leu) + AMP + diphosphate</text>
        <dbReference type="Rhea" id="RHEA:11688"/>
        <dbReference type="Rhea" id="RHEA-COMP:9613"/>
        <dbReference type="Rhea" id="RHEA-COMP:9622"/>
        <dbReference type="ChEBI" id="CHEBI:30616"/>
        <dbReference type="ChEBI" id="CHEBI:33019"/>
        <dbReference type="ChEBI" id="CHEBI:57427"/>
        <dbReference type="ChEBI" id="CHEBI:78442"/>
        <dbReference type="ChEBI" id="CHEBI:78494"/>
        <dbReference type="ChEBI" id="CHEBI:456215"/>
        <dbReference type="EC" id="6.1.1.4"/>
    </reaction>
</comment>
<comment type="subcellular location">
    <subcellularLocation>
        <location evidence="1">Cytoplasm</location>
    </subcellularLocation>
</comment>
<comment type="similarity">
    <text evidence="1">Belongs to the class-I aminoacyl-tRNA synthetase family.</text>
</comment>
<proteinExistence type="inferred from homology"/>
<gene>
    <name evidence="1" type="primary">leuS</name>
    <name type="ordered locus">Pars_0260</name>
</gene>
<evidence type="ECO:0000255" key="1">
    <source>
        <dbReference type="HAMAP-Rule" id="MF_00049"/>
    </source>
</evidence>
<feature type="chain" id="PRO_1000009403" description="Leucine--tRNA ligase">
    <location>
        <begin position="1"/>
        <end position="945"/>
    </location>
</feature>
<feature type="short sequence motif" description="'HIGH' region">
    <location>
        <begin position="43"/>
        <end position="53"/>
    </location>
</feature>
<feature type="short sequence motif" description="'KMSKS' region">
    <location>
        <begin position="638"/>
        <end position="642"/>
    </location>
</feature>
<feature type="binding site" evidence="1">
    <location>
        <position position="641"/>
    </location>
    <ligand>
        <name>ATP</name>
        <dbReference type="ChEBI" id="CHEBI:30616"/>
    </ligand>
</feature>
<reference key="1">
    <citation type="submission" date="2007-04" db="EMBL/GenBank/DDBJ databases">
        <title>Complete sequence of Pyrobaculum arsenaticum DSM 13514.</title>
        <authorList>
            <consortium name="US DOE Joint Genome Institute"/>
            <person name="Copeland A."/>
            <person name="Lucas S."/>
            <person name="Lapidus A."/>
            <person name="Barry K."/>
            <person name="Glavina del Rio T."/>
            <person name="Dalin E."/>
            <person name="Tice H."/>
            <person name="Pitluck S."/>
            <person name="Chain P."/>
            <person name="Malfatti S."/>
            <person name="Shin M."/>
            <person name="Vergez L."/>
            <person name="Schmutz J."/>
            <person name="Larimer F."/>
            <person name="Land M."/>
            <person name="Hauser L."/>
            <person name="Kyrpides N."/>
            <person name="Mikhailova N."/>
            <person name="Cozen A.E."/>
            <person name="Fitz-Gibbon S.T."/>
            <person name="House C.H."/>
            <person name="Saltikov C."/>
            <person name="Lowe T.M."/>
            <person name="Richardson P."/>
        </authorList>
    </citation>
    <scope>NUCLEOTIDE SEQUENCE [LARGE SCALE GENOMIC DNA]</scope>
    <source>
        <strain>ATCC 700994 / DSM 13514 / JCM 11321 / PZ6</strain>
    </source>
</reference>
<protein>
    <recommendedName>
        <fullName evidence="1">Leucine--tRNA ligase</fullName>
        <ecNumber evidence="1">6.1.1.4</ecNumber>
    </recommendedName>
    <alternativeName>
        <fullName evidence="1">Leucyl-tRNA synthetase</fullName>
        <shortName evidence="1">LeuRS</shortName>
    </alternativeName>
</protein>